<feature type="chain" id="PRO_0000234396" description="Protein orai-3">
    <location>
        <begin position="1"/>
        <end position="290"/>
    </location>
</feature>
<feature type="transmembrane region" description="Helical" evidence="2">
    <location>
        <begin position="63"/>
        <end position="82"/>
    </location>
</feature>
<feature type="transmembrane region" description="Helical" evidence="2">
    <location>
        <begin position="95"/>
        <end position="115"/>
    </location>
</feature>
<feature type="transmembrane region" description="Helical" evidence="2">
    <location>
        <begin position="157"/>
        <end position="177"/>
    </location>
</feature>
<feature type="transmembrane region" description="Helical" evidence="2">
    <location>
        <begin position="239"/>
        <end position="259"/>
    </location>
</feature>
<feature type="region of interest" description="Disordered" evidence="3">
    <location>
        <begin position="1"/>
        <end position="21"/>
    </location>
</feature>
<feature type="site" description="Confers selective permeability to Ca(2+) ions" evidence="1">
    <location>
        <position position="81"/>
    </location>
</feature>
<feature type="modified residue" description="Phosphoserine" evidence="5">
    <location>
        <position position="42"/>
    </location>
</feature>
<feature type="modified residue" description="Phosphoserine" evidence="5">
    <location>
        <position position="45"/>
    </location>
</feature>
<sequence length="290" mass="31358">MKGGEGDTGEQAPLNPEVDSPAGSATYREFVHRGYLDLMGASQHSLRALSWRRLYLSRAKLKASSRTSALLSGFAMVAMVEVQLENDHEYPPGLLVAFSACTTVLVAVHLFALMVSTCLLPHIEAVSNIHNLNSVHQSPHQRLHRYVELAWGFSTALGTFLFLAEVVLVGWVKFVPIGAPMGKPAPVVPMSQVPPVTVSLSLASNLTPSSASITTSQQPSKACPPRQVCDSAHGPGWQAAMASTAIMVPVGLVFMAFALHFYRSLVAHKTDRHKQELEELSRLQGELQAV</sequence>
<keyword id="KW-0106">Calcium</keyword>
<keyword id="KW-0107">Calcium channel</keyword>
<keyword id="KW-0109">Calcium transport</keyword>
<keyword id="KW-1003">Cell membrane</keyword>
<keyword id="KW-0407">Ion channel</keyword>
<keyword id="KW-0406">Ion transport</keyword>
<keyword id="KW-0472">Membrane</keyword>
<keyword id="KW-0597">Phosphoprotein</keyword>
<keyword id="KW-1185">Reference proteome</keyword>
<keyword id="KW-0812">Transmembrane</keyword>
<keyword id="KW-1133">Transmembrane helix</keyword>
<keyword id="KW-0813">Transport</keyword>
<name>ORAI3_MOUSE</name>
<reference key="1">
    <citation type="journal article" date="2005" name="Science">
        <title>The transcriptional landscape of the mammalian genome.</title>
        <authorList>
            <person name="Carninci P."/>
            <person name="Kasukawa T."/>
            <person name="Katayama S."/>
            <person name="Gough J."/>
            <person name="Frith M.C."/>
            <person name="Maeda N."/>
            <person name="Oyama R."/>
            <person name="Ravasi T."/>
            <person name="Lenhard B."/>
            <person name="Wells C."/>
            <person name="Kodzius R."/>
            <person name="Shimokawa K."/>
            <person name="Bajic V.B."/>
            <person name="Brenner S.E."/>
            <person name="Batalov S."/>
            <person name="Forrest A.R."/>
            <person name="Zavolan M."/>
            <person name="Davis M.J."/>
            <person name="Wilming L.G."/>
            <person name="Aidinis V."/>
            <person name="Allen J.E."/>
            <person name="Ambesi-Impiombato A."/>
            <person name="Apweiler R."/>
            <person name="Aturaliya R.N."/>
            <person name="Bailey T.L."/>
            <person name="Bansal M."/>
            <person name="Baxter L."/>
            <person name="Beisel K.W."/>
            <person name="Bersano T."/>
            <person name="Bono H."/>
            <person name="Chalk A.M."/>
            <person name="Chiu K.P."/>
            <person name="Choudhary V."/>
            <person name="Christoffels A."/>
            <person name="Clutterbuck D.R."/>
            <person name="Crowe M.L."/>
            <person name="Dalla E."/>
            <person name="Dalrymple B.P."/>
            <person name="de Bono B."/>
            <person name="Della Gatta G."/>
            <person name="di Bernardo D."/>
            <person name="Down T."/>
            <person name="Engstrom P."/>
            <person name="Fagiolini M."/>
            <person name="Faulkner G."/>
            <person name="Fletcher C.F."/>
            <person name="Fukushima T."/>
            <person name="Furuno M."/>
            <person name="Futaki S."/>
            <person name="Gariboldi M."/>
            <person name="Georgii-Hemming P."/>
            <person name="Gingeras T.R."/>
            <person name="Gojobori T."/>
            <person name="Green R.E."/>
            <person name="Gustincich S."/>
            <person name="Harbers M."/>
            <person name="Hayashi Y."/>
            <person name="Hensch T.K."/>
            <person name="Hirokawa N."/>
            <person name="Hill D."/>
            <person name="Huminiecki L."/>
            <person name="Iacono M."/>
            <person name="Ikeo K."/>
            <person name="Iwama A."/>
            <person name="Ishikawa T."/>
            <person name="Jakt M."/>
            <person name="Kanapin A."/>
            <person name="Katoh M."/>
            <person name="Kawasawa Y."/>
            <person name="Kelso J."/>
            <person name="Kitamura H."/>
            <person name="Kitano H."/>
            <person name="Kollias G."/>
            <person name="Krishnan S.P."/>
            <person name="Kruger A."/>
            <person name="Kummerfeld S.K."/>
            <person name="Kurochkin I.V."/>
            <person name="Lareau L.F."/>
            <person name="Lazarevic D."/>
            <person name="Lipovich L."/>
            <person name="Liu J."/>
            <person name="Liuni S."/>
            <person name="McWilliam S."/>
            <person name="Madan Babu M."/>
            <person name="Madera M."/>
            <person name="Marchionni L."/>
            <person name="Matsuda H."/>
            <person name="Matsuzawa S."/>
            <person name="Miki H."/>
            <person name="Mignone F."/>
            <person name="Miyake S."/>
            <person name="Morris K."/>
            <person name="Mottagui-Tabar S."/>
            <person name="Mulder N."/>
            <person name="Nakano N."/>
            <person name="Nakauchi H."/>
            <person name="Ng P."/>
            <person name="Nilsson R."/>
            <person name="Nishiguchi S."/>
            <person name="Nishikawa S."/>
            <person name="Nori F."/>
            <person name="Ohara O."/>
            <person name="Okazaki Y."/>
            <person name="Orlando V."/>
            <person name="Pang K.C."/>
            <person name="Pavan W.J."/>
            <person name="Pavesi G."/>
            <person name="Pesole G."/>
            <person name="Petrovsky N."/>
            <person name="Piazza S."/>
            <person name="Reed J."/>
            <person name="Reid J.F."/>
            <person name="Ring B.Z."/>
            <person name="Ringwald M."/>
            <person name="Rost B."/>
            <person name="Ruan Y."/>
            <person name="Salzberg S.L."/>
            <person name="Sandelin A."/>
            <person name="Schneider C."/>
            <person name="Schoenbach C."/>
            <person name="Sekiguchi K."/>
            <person name="Semple C.A."/>
            <person name="Seno S."/>
            <person name="Sessa L."/>
            <person name="Sheng Y."/>
            <person name="Shibata Y."/>
            <person name="Shimada H."/>
            <person name="Shimada K."/>
            <person name="Silva D."/>
            <person name="Sinclair B."/>
            <person name="Sperling S."/>
            <person name="Stupka E."/>
            <person name="Sugiura K."/>
            <person name="Sultana R."/>
            <person name="Takenaka Y."/>
            <person name="Taki K."/>
            <person name="Tammoja K."/>
            <person name="Tan S.L."/>
            <person name="Tang S."/>
            <person name="Taylor M.S."/>
            <person name="Tegner J."/>
            <person name="Teichmann S.A."/>
            <person name="Ueda H.R."/>
            <person name="van Nimwegen E."/>
            <person name="Verardo R."/>
            <person name="Wei C.L."/>
            <person name="Yagi K."/>
            <person name="Yamanishi H."/>
            <person name="Zabarovsky E."/>
            <person name="Zhu S."/>
            <person name="Zimmer A."/>
            <person name="Hide W."/>
            <person name="Bult C."/>
            <person name="Grimmond S.M."/>
            <person name="Teasdale R.D."/>
            <person name="Liu E.T."/>
            <person name="Brusic V."/>
            <person name="Quackenbush J."/>
            <person name="Wahlestedt C."/>
            <person name="Mattick J.S."/>
            <person name="Hume D.A."/>
            <person name="Kai C."/>
            <person name="Sasaki D."/>
            <person name="Tomaru Y."/>
            <person name="Fukuda S."/>
            <person name="Kanamori-Katayama M."/>
            <person name="Suzuki M."/>
            <person name="Aoki J."/>
            <person name="Arakawa T."/>
            <person name="Iida J."/>
            <person name="Imamura K."/>
            <person name="Itoh M."/>
            <person name="Kato T."/>
            <person name="Kawaji H."/>
            <person name="Kawagashira N."/>
            <person name="Kawashima T."/>
            <person name="Kojima M."/>
            <person name="Kondo S."/>
            <person name="Konno H."/>
            <person name="Nakano K."/>
            <person name="Ninomiya N."/>
            <person name="Nishio T."/>
            <person name="Okada M."/>
            <person name="Plessy C."/>
            <person name="Shibata K."/>
            <person name="Shiraki T."/>
            <person name="Suzuki S."/>
            <person name="Tagami M."/>
            <person name="Waki K."/>
            <person name="Watahiki A."/>
            <person name="Okamura-Oho Y."/>
            <person name="Suzuki H."/>
            <person name="Kawai J."/>
            <person name="Hayashizaki Y."/>
        </authorList>
    </citation>
    <scope>NUCLEOTIDE SEQUENCE [LARGE SCALE MRNA]</scope>
    <source>
        <strain>C57BL/6J</strain>
        <tissue>Embryo</tissue>
    </source>
</reference>
<reference key="2">
    <citation type="journal article" date="2004" name="Genome Res.">
        <title>The status, quality, and expansion of the NIH full-length cDNA project: the Mammalian Gene Collection (MGC).</title>
        <authorList>
            <consortium name="The MGC Project Team"/>
        </authorList>
    </citation>
    <scope>NUCLEOTIDE SEQUENCE [LARGE SCALE MRNA]</scope>
    <source>
        <tissue>Pituitary</tissue>
    </source>
</reference>
<reference key="3">
    <citation type="journal article" date="2010" name="Cell">
        <title>A tissue-specific atlas of mouse protein phosphorylation and expression.</title>
        <authorList>
            <person name="Huttlin E.L."/>
            <person name="Jedrychowski M.P."/>
            <person name="Elias J.E."/>
            <person name="Goswami T."/>
            <person name="Rad R."/>
            <person name="Beausoleil S.A."/>
            <person name="Villen J."/>
            <person name="Haas W."/>
            <person name="Sowa M.E."/>
            <person name="Gygi S.P."/>
        </authorList>
    </citation>
    <scope>PHOSPHORYLATION [LARGE SCALE ANALYSIS] AT SER-42 AND SER-45</scope>
    <scope>IDENTIFICATION BY MASS SPECTROMETRY [LARGE SCALE ANALYSIS]</scope>
    <source>
        <tissue>Brown adipose tissue</tissue>
        <tissue>Kidney</tissue>
    </source>
</reference>
<accession>Q6P8G8</accession>
<proteinExistence type="evidence at protein level"/>
<gene>
    <name type="primary">Orai3</name>
    <name type="synonym">Tmem142c</name>
</gene>
<protein>
    <recommendedName>
        <fullName>Protein orai-3</fullName>
    </recommendedName>
    <alternativeName>
        <fullName>Transmembrane protein 142C</fullName>
    </alternativeName>
</protein>
<evidence type="ECO:0000250" key="1">
    <source>
        <dbReference type="UniProtKB" id="Q9BRQ5"/>
    </source>
</evidence>
<evidence type="ECO:0000255" key="2"/>
<evidence type="ECO:0000256" key="3">
    <source>
        <dbReference type="SAM" id="MobiDB-lite"/>
    </source>
</evidence>
<evidence type="ECO:0000305" key="4"/>
<evidence type="ECO:0007744" key="5">
    <source>
    </source>
</evidence>
<comment type="function">
    <text evidence="1">Pore-forming subunit of two major inward rectifying Ca(2+) channels at the plasma membrane: Ca(2+) release-activated Ca(2+) (CRAC) channels and arachidonate-regulated Ca(2+)-selective (ARC) channels. Assembles with ORAI1 and ORAI2 to form hexameric CRAC channels that mediate Ca(2+) influx upon depletion of endoplasmic reticulum Ca(2+) store and channel activation by Ca(2+) sensor STIM1, a process known as store-operated Ca(2+) entry (SOCE). Various pore subunit combinations may account for distinct CRAC channel spatiotemporal and cell-type specific dynamics. ORAI1 mainly contributes to the generation of Ca(2+) plateaus involved in sustained Ca(2+) entry and is dispensable for cytosolic Ca(2+) oscillations, whereas ORAI2 and ORAI3 generate oscillatory patterns. CRAC channels assemble in Ca(2+) signaling microdomains where Ca(2+) influx is coupled to calmodulin and calcineurin signaling and activation of NFAT transcription factors recruited to ORAI1 via AKAP5. CRAC channels are the main pathway for Ca(2+) influx in T cells and promote the immune response to pathogens by activating NFAT-dependent cytokine and chemokine transcription. Assembles with ORAI1 to form channels that mediate store-independent Ca(2+) influx in response to inflammatory metabolites arachidonate or its derivative leukotriene C4, termed ARC and LRC channels respectively.</text>
</comment>
<comment type="catalytic activity">
    <reaction evidence="1">
        <text>Ca(2+)(in) = Ca(2+)(out)</text>
        <dbReference type="Rhea" id="RHEA:29671"/>
        <dbReference type="ChEBI" id="CHEBI:29108"/>
    </reaction>
    <physiologicalReaction direction="right-to-left" evidence="1">
        <dbReference type="Rhea" id="RHEA:29673"/>
    </physiologicalReaction>
</comment>
<comment type="activity regulation">
    <text evidence="1">CRAC channels are regulated by fast Ca(2+)-dependent inactivation (FCDI), a mechanism that limits Ca(2+) influx and cell toxicity. ORAI3 subunit displays prominent FCDI. Inhibited by lanthanides such as Gd(3+) ions.</text>
</comment>
<comment type="subunit">
    <text evidence="1">Oligomerizes in homomeric and heteromeric ORAI complexes. Native CRAC channels most likely consist of hexameric ORAI heteromers, implying that diverse ORAI1, ORAI2 and ORAI3 subunit combinations with distinct biophysical properties can operate in a cell-type specific way. ARC channels are heteropentamers consisting of three ORAI1 and two ORAI3 subunits. Interacts with STIM1; this regulates channel activity. Interacts with CRACR2A/EFCAB4B.</text>
</comment>
<comment type="subcellular location">
    <subcellularLocation>
        <location evidence="1">Cell membrane</location>
        <topology evidence="2">Multi-pass membrane protein</topology>
    </subcellularLocation>
    <text evidence="1">Colocalizes with STIM1 upon store depletion.</text>
</comment>
<comment type="similarity">
    <text evidence="4">Belongs to the Orai family.</text>
</comment>
<dbReference type="EMBL" id="AK136955">
    <property type="protein sequence ID" value="BAE23186.1"/>
    <property type="molecule type" value="mRNA"/>
</dbReference>
<dbReference type="EMBL" id="BC061259">
    <property type="protein sequence ID" value="AAH61259.1"/>
    <property type="molecule type" value="mRNA"/>
</dbReference>
<dbReference type="CCDS" id="CCDS21878.1"/>
<dbReference type="RefSeq" id="NP_940816.1">
    <property type="nucleotide sequence ID" value="NM_198424.3"/>
</dbReference>
<dbReference type="SMR" id="Q6P8G8"/>
<dbReference type="FunCoup" id="Q6P8G8">
    <property type="interactions" value="479"/>
</dbReference>
<dbReference type="STRING" id="10090.ENSMUSP00000050279"/>
<dbReference type="iPTMnet" id="Q6P8G8"/>
<dbReference type="PhosphoSitePlus" id="Q6P8G8"/>
<dbReference type="PaxDb" id="10090-ENSMUSP00000050279"/>
<dbReference type="ProteomicsDB" id="293848"/>
<dbReference type="Antibodypedia" id="3108">
    <property type="antibodies" value="271 antibodies from 30 providers"/>
</dbReference>
<dbReference type="Ensembl" id="ENSMUST00000061587.13">
    <property type="protein sequence ID" value="ENSMUSP00000050279.7"/>
    <property type="gene ID" value="ENSMUSG00000043964.15"/>
</dbReference>
<dbReference type="GeneID" id="269999"/>
<dbReference type="KEGG" id="mmu:269999"/>
<dbReference type="UCSC" id="uc009jwr.1">
    <property type="organism name" value="mouse"/>
</dbReference>
<dbReference type="AGR" id="MGI:3039586"/>
<dbReference type="CTD" id="93129"/>
<dbReference type="MGI" id="MGI:3039586">
    <property type="gene designation" value="Orai3"/>
</dbReference>
<dbReference type="VEuPathDB" id="HostDB:ENSMUSG00000043964"/>
<dbReference type="eggNOG" id="KOG4298">
    <property type="taxonomic scope" value="Eukaryota"/>
</dbReference>
<dbReference type="GeneTree" id="ENSGT00390000015354"/>
<dbReference type="HOGENOM" id="CLU_062509_1_1_1"/>
<dbReference type="InParanoid" id="Q6P8G8"/>
<dbReference type="OMA" id="DFVHRGY"/>
<dbReference type="OrthoDB" id="61124at2759"/>
<dbReference type="PhylomeDB" id="Q6P8G8"/>
<dbReference type="TreeFam" id="TF313576"/>
<dbReference type="BioGRID-ORCS" id="269999">
    <property type="hits" value="2 hits in 77 CRISPR screens"/>
</dbReference>
<dbReference type="PRO" id="PR:Q6P8G8"/>
<dbReference type="Proteomes" id="UP000000589">
    <property type="component" value="Chromosome 7"/>
</dbReference>
<dbReference type="RNAct" id="Q6P8G8">
    <property type="molecule type" value="protein"/>
</dbReference>
<dbReference type="Bgee" id="ENSMUSG00000043964">
    <property type="expression patterns" value="Expressed in granulocyte and 184 other cell types or tissues"/>
</dbReference>
<dbReference type="ExpressionAtlas" id="Q6P8G8">
    <property type="expression patterns" value="baseline and differential"/>
</dbReference>
<dbReference type="GO" id="GO:0016020">
    <property type="term" value="C:membrane"/>
    <property type="evidence" value="ECO:0000314"/>
    <property type="project" value="MGI"/>
</dbReference>
<dbReference type="GO" id="GO:0005886">
    <property type="term" value="C:plasma membrane"/>
    <property type="evidence" value="ECO:0007669"/>
    <property type="project" value="UniProtKB-SubCell"/>
</dbReference>
<dbReference type="GO" id="GO:0015279">
    <property type="term" value="F:store-operated calcium channel activity"/>
    <property type="evidence" value="ECO:0007669"/>
    <property type="project" value="Ensembl"/>
</dbReference>
<dbReference type="GO" id="GO:0002115">
    <property type="term" value="P:store-operated calcium entry"/>
    <property type="evidence" value="ECO:0000315"/>
    <property type="project" value="MGI"/>
</dbReference>
<dbReference type="Gene3D" id="1.20.140.140">
    <property type="entry name" value="Calcium release-activated calcium channel protein Orai"/>
    <property type="match status" value="1"/>
</dbReference>
<dbReference type="InterPro" id="IPR012446">
    <property type="entry name" value="CRAC_channel"/>
</dbReference>
<dbReference type="InterPro" id="IPR038350">
    <property type="entry name" value="Orai_sf"/>
</dbReference>
<dbReference type="PANTHER" id="PTHR31501">
    <property type="entry name" value="CALCIUM RELEASE-ACTIVATED CALCIUM CHANNEL PROTEIN 1"/>
    <property type="match status" value="1"/>
</dbReference>
<dbReference type="PANTHER" id="PTHR31501:SF6">
    <property type="entry name" value="PROTEIN ORAI-3"/>
    <property type="match status" value="1"/>
</dbReference>
<dbReference type="Pfam" id="PF07856">
    <property type="entry name" value="Orai-1"/>
    <property type="match status" value="1"/>
</dbReference>
<organism>
    <name type="scientific">Mus musculus</name>
    <name type="common">Mouse</name>
    <dbReference type="NCBI Taxonomy" id="10090"/>
    <lineage>
        <taxon>Eukaryota</taxon>
        <taxon>Metazoa</taxon>
        <taxon>Chordata</taxon>
        <taxon>Craniata</taxon>
        <taxon>Vertebrata</taxon>
        <taxon>Euteleostomi</taxon>
        <taxon>Mammalia</taxon>
        <taxon>Eutheria</taxon>
        <taxon>Euarchontoglires</taxon>
        <taxon>Glires</taxon>
        <taxon>Rodentia</taxon>
        <taxon>Myomorpha</taxon>
        <taxon>Muroidea</taxon>
        <taxon>Muridae</taxon>
        <taxon>Murinae</taxon>
        <taxon>Mus</taxon>
        <taxon>Mus</taxon>
    </lineage>
</organism>